<gene>
    <name evidence="1" type="primary">rpmF</name>
    <name type="ordered locus">Tpet_0775</name>
</gene>
<dbReference type="EMBL" id="CP000702">
    <property type="protein sequence ID" value="ABQ46794.1"/>
    <property type="molecule type" value="Genomic_DNA"/>
</dbReference>
<dbReference type="RefSeq" id="WP_004082761.1">
    <property type="nucleotide sequence ID" value="NC_009486.1"/>
</dbReference>
<dbReference type="SMR" id="A5IKS1"/>
<dbReference type="STRING" id="390874.Tpet_0775"/>
<dbReference type="KEGG" id="tpt:Tpet_0775"/>
<dbReference type="eggNOG" id="COG0333">
    <property type="taxonomic scope" value="Bacteria"/>
</dbReference>
<dbReference type="HOGENOM" id="CLU_129084_1_3_0"/>
<dbReference type="Proteomes" id="UP000006558">
    <property type="component" value="Chromosome"/>
</dbReference>
<dbReference type="GO" id="GO:0015934">
    <property type="term" value="C:large ribosomal subunit"/>
    <property type="evidence" value="ECO:0007669"/>
    <property type="project" value="InterPro"/>
</dbReference>
<dbReference type="GO" id="GO:0003735">
    <property type="term" value="F:structural constituent of ribosome"/>
    <property type="evidence" value="ECO:0007669"/>
    <property type="project" value="InterPro"/>
</dbReference>
<dbReference type="GO" id="GO:0006412">
    <property type="term" value="P:translation"/>
    <property type="evidence" value="ECO:0007669"/>
    <property type="project" value="UniProtKB-UniRule"/>
</dbReference>
<dbReference type="HAMAP" id="MF_00340">
    <property type="entry name" value="Ribosomal_bL32"/>
    <property type="match status" value="1"/>
</dbReference>
<dbReference type="InterPro" id="IPR002677">
    <property type="entry name" value="Ribosomal_bL32"/>
</dbReference>
<dbReference type="InterPro" id="IPR044957">
    <property type="entry name" value="Ribosomal_bL32_bact"/>
</dbReference>
<dbReference type="InterPro" id="IPR011332">
    <property type="entry name" value="Ribosomal_zn-bd"/>
</dbReference>
<dbReference type="NCBIfam" id="TIGR01031">
    <property type="entry name" value="rpmF_bact"/>
    <property type="match status" value="1"/>
</dbReference>
<dbReference type="PANTHER" id="PTHR35534">
    <property type="entry name" value="50S RIBOSOMAL PROTEIN L32"/>
    <property type="match status" value="1"/>
</dbReference>
<dbReference type="PANTHER" id="PTHR35534:SF1">
    <property type="entry name" value="LARGE RIBOSOMAL SUBUNIT PROTEIN BL32"/>
    <property type="match status" value="1"/>
</dbReference>
<dbReference type="Pfam" id="PF01783">
    <property type="entry name" value="Ribosomal_L32p"/>
    <property type="match status" value="1"/>
</dbReference>
<dbReference type="SUPFAM" id="SSF57829">
    <property type="entry name" value="Zn-binding ribosomal proteins"/>
    <property type="match status" value="1"/>
</dbReference>
<feature type="chain" id="PRO_1000005086" description="Large ribosomal subunit protein bL32">
    <location>
        <begin position="1"/>
        <end position="60"/>
    </location>
</feature>
<accession>A5IKS1</accession>
<organism>
    <name type="scientific">Thermotoga petrophila (strain ATCC BAA-488 / DSM 13995 / JCM 10881 / RKU-1)</name>
    <dbReference type="NCBI Taxonomy" id="390874"/>
    <lineage>
        <taxon>Bacteria</taxon>
        <taxon>Thermotogati</taxon>
        <taxon>Thermotogota</taxon>
        <taxon>Thermotogae</taxon>
        <taxon>Thermotogales</taxon>
        <taxon>Thermotogaceae</taxon>
        <taxon>Thermotoga</taxon>
    </lineage>
</organism>
<evidence type="ECO:0000255" key="1">
    <source>
        <dbReference type="HAMAP-Rule" id="MF_00340"/>
    </source>
</evidence>
<evidence type="ECO:0000305" key="2"/>
<keyword id="KW-0687">Ribonucleoprotein</keyword>
<keyword id="KW-0689">Ribosomal protein</keyword>
<sequence>MAVPKQKRSRSRTHHKRAKIYRAISVPLEKCPNCGEYKMPHRVCLHCGYYKGKQVLEISE</sequence>
<reference key="1">
    <citation type="submission" date="2007-05" db="EMBL/GenBank/DDBJ databases">
        <title>Complete sequence of Thermotoga petrophila RKU-1.</title>
        <authorList>
            <consortium name="US DOE Joint Genome Institute"/>
            <person name="Copeland A."/>
            <person name="Lucas S."/>
            <person name="Lapidus A."/>
            <person name="Barry K."/>
            <person name="Glavina del Rio T."/>
            <person name="Dalin E."/>
            <person name="Tice H."/>
            <person name="Pitluck S."/>
            <person name="Sims D."/>
            <person name="Brettin T."/>
            <person name="Bruce D."/>
            <person name="Detter J.C."/>
            <person name="Han C."/>
            <person name="Tapia R."/>
            <person name="Schmutz J."/>
            <person name="Larimer F."/>
            <person name="Land M."/>
            <person name="Hauser L."/>
            <person name="Kyrpides N."/>
            <person name="Mikhailova N."/>
            <person name="Nelson K."/>
            <person name="Gogarten J.P."/>
            <person name="Noll K."/>
            <person name="Richardson P."/>
        </authorList>
    </citation>
    <scope>NUCLEOTIDE SEQUENCE [LARGE SCALE GENOMIC DNA]</scope>
    <source>
        <strain>ATCC BAA-488 / DSM 13995 / JCM 10881 / RKU-1</strain>
    </source>
</reference>
<protein>
    <recommendedName>
        <fullName evidence="1">Large ribosomal subunit protein bL32</fullName>
    </recommendedName>
    <alternativeName>
        <fullName evidence="2">50S ribosomal protein L32</fullName>
    </alternativeName>
</protein>
<name>RL32_THEP1</name>
<proteinExistence type="inferred from homology"/>
<comment type="similarity">
    <text evidence="1">Belongs to the bacterial ribosomal protein bL32 family.</text>
</comment>